<protein>
    <recommendedName>
        <fullName evidence="6">3-ketoacyl-CoA synthase 9</fullName>
        <shortName evidence="6">KCS-9</shortName>
        <ecNumber evidence="7">2.3.1.199</ecNumber>
    </recommendedName>
    <alternativeName>
        <fullName evidence="6">Very long-chain fatty acid condensing enzyme 9</fullName>
        <shortName evidence="6">VLCFA condensing enzyme 9</shortName>
    </alternativeName>
</protein>
<proteinExistence type="evidence at transcript level"/>
<dbReference type="EC" id="2.3.1.199" evidence="7"/>
<dbReference type="EMBL" id="AC007047">
    <property type="protein sequence ID" value="AAD22309.1"/>
    <property type="molecule type" value="Genomic_DNA"/>
</dbReference>
<dbReference type="EMBL" id="CP002685">
    <property type="protein sequence ID" value="AEC06480.1"/>
    <property type="molecule type" value="Genomic_DNA"/>
</dbReference>
<dbReference type="EMBL" id="AK226284">
    <property type="status" value="NOT_ANNOTATED_CDS"/>
    <property type="molecule type" value="mRNA"/>
</dbReference>
<dbReference type="PIR" id="F84538">
    <property type="entry name" value="F84538"/>
</dbReference>
<dbReference type="RefSeq" id="NP_179223.1">
    <property type="nucleotide sequence ID" value="NM_127184.3"/>
</dbReference>
<dbReference type="SMR" id="Q9SIX1"/>
<dbReference type="BioGRID" id="1483">
    <property type="interactions" value="10"/>
</dbReference>
<dbReference type="FunCoup" id="Q9SIX1">
    <property type="interactions" value="205"/>
</dbReference>
<dbReference type="IntAct" id="Q9SIX1">
    <property type="interactions" value="1"/>
</dbReference>
<dbReference type="STRING" id="3702.Q9SIX1"/>
<dbReference type="iPTMnet" id="Q9SIX1"/>
<dbReference type="PaxDb" id="3702-AT2G16280.1"/>
<dbReference type="ProteomicsDB" id="230118"/>
<dbReference type="EnsemblPlants" id="AT2G16280.1">
    <property type="protein sequence ID" value="AT2G16280.1"/>
    <property type="gene ID" value="AT2G16280"/>
</dbReference>
<dbReference type="GeneID" id="816124"/>
<dbReference type="Gramene" id="AT2G16280.1">
    <property type="protein sequence ID" value="AT2G16280.1"/>
    <property type="gene ID" value="AT2G16280"/>
</dbReference>
<dbReference type="KEGG" id="ath:AT2G16280"/>
<dbReference type="Araport" id="AT2G16280"/>
<dbReference type="TAIR" id="AT2G16280">
    <property type="gene designation" value="KCS9"/>
</dbReference>
<dbReference type="eggNOG" id="ENOG502QPKZ">
    <property type="taxonomic scope" value="Eukaryota"/>
</dbReference>
<dbReference type="HOGENOM" id="CLU_013238_2_0_1"/>
<dbReference type="InParanoid" id="Q9SIX1"/>
<dbReference type="OMA" id="YQIWLHL"/>
<dbReference type="PhylomeDB" id="Q9SIX1"/>
<dbReference type="BioCyc" id="ARA:AT2G16280-MONOMER"/>
<dbReference type="UniPathway" id="UPA00094"/>
<dbReference type="PRO" id="PR:Q9SIX1"/>
<dbReference type="Proteomes" id="UP000006548">
    <property type="component" value="Chromosome 2"/>
</dbReference>
<dbReference type="ExpressionAtlas" id="Q9SIX1">
    <property type="expression patterns" value="baseline and differential"/>
</dbReference>
<dbReference type="GO" id="GO:0005789">
    <property type="term" value="C:endoplasmic reticulum membrane"/>
    <property type="evidence" value="ECO:0007669"/>
    <property type="project" value="UniProtKB-SubCell"/>
</dbReference>
<dbReference type="GO" id="GO:0009922">
    <property type="term" value="F:fatty acid elongase activity"/>
    <property type="evidence" value="ECO:0007669"/>
    <property type="project" value="UniProtKB-EC"/>
</dbReference>
<dbReference type="GO" id="GO:0006633">
    <property type="term" value="P:fatty acid biosynthetic process"/>
    <property type="evidence" value="ECO:0007669"/>
    <property type="project" value="UniProtKB-UniPathway"/>
</dbReference>
<dbReference type="GO" id="GO:0009409">
    <property type="term" value="P:response to cold"/>
    <property type="evidence" value="ECO:0000270"/>
    <property type="project" value="TAIR"/>
</dbReference>
<dbReference type="GO" id="GO:0009416">
    <property type="term" value="P:response to light stimulus"/>
    <property type="evidence" value="ECO:0000270"/>
    <property type="project" value="TAIR"/>
</dbReference>
<dbReference type="CDD" id="cd00831">
    <property type="entry name" value="CHS_like"/>
    <property type="match status" value="1"/>
</dbReference>
<dbReference type="FunFam" id="3.40.47.10:FF:000028">
    <property type="entry name" value="3-ketoacyl-CoA synthase"/>
    <property type="match status" value="1"/>
</dbReference>
<dbReference type="Gene3D" id="3.40.47.10">
    <property type="match status" value="1"/>
</dbReference>
<dbReference type="InterPro" id="IPR012392">
    <property type="entry name" value="3-ktacl-CoA_syn"/>
</dbReference>
<dbReference type="InterPro" id="IPR013747">
    <property type="entry name" value="ACP_syn_III_C"/>
</dbReference>
<dbReference type="InterPro" id="IPR013601">
    <property type="entry name" value="FAE1_typ3_polyketide_synth"/>
</dbReference>
<dbReference type="InterPro" id="IPR016039">
    <property type="entry name" value="Thiolase-like"/>
</dbReference>
<dbReference type="PANTHER" id="PTHR31561">
    <property type="entry name" value="3-KETOACYL-COA SYNTHASE"/>
    <property type="match status" value="1"/>
</dbReference>
<dbReference type="Pfam" id="PF08541">
    <property type="entry name" value="ACP_syn_III_C"/>
    <property type="match status" value="1"/>
</dbReference>
<dbReference type="Pfam" id="PF08392">
    <property type="entry name" value="FAE1_CUT1_RppA"/>
    <property type="match status" value="1"/>
</dbReference>
<dbReference type="PIRSF" id="PIRSF036417">
    <property type="entry name" value="3-ktacl-CoA_syn"/>
    <property type="match status" value="1"/>
</dbReference>
<dbReference type="SUPFAM" id="SSF53901">
    <property type="entry name" value="Thiolase-like"/>
    <property type="match status" value="2"/>
</dbReference>
<accession>Q9SIX1</accession>
<comment type="function">
    <text evidence="5">Involved in the elongation of C22 to C24 fatty acids, which are precursors for the biosynthesis of cuticular waxes, aliphatic suberins, and membrane lipids, including sphingolipids and phospholipids.</text>
</comment>
<comment type="catalytic activity">
    <reaction evidence="7">
        <text>a very-long-chain acyl-CoA + malonyl-CoA + H(+) = a very-long-chain 3-oxoacyl-CoA + CO2 + CoA</text>
        <dbReference type="Rhea" id="RHEA:32727"/>
        <dbReference type="ChEBI" id="CHEBI:15378"/>
        <dbReference type="ChEBI" id="CHEBI:16526"/>
        <dbReference type="ChEBI" id="CHEBI:57287"/>
        <dbReference type="ChEBI" id="CHEBI:57384"/>
        <dbReference type="ChEBI" id="CHEBI:90725"/>
        <dbReference type="ChEBI" id="CHEBI:90736"/>
        <dbReference type="EC" id="2.3.1.199"/>
    </reaction>
</comment>
<comment type="pathway">
    <text>Lipid metabolism; fatty acid biosynthesis.</text>
</comment>
<comment type="subcellular location">
    <subcellularLocation>
        <location evidence="5">Endoplasmic reticulum membrane</location>
        <topology evidence="2">Multi-pass membrane protein</topology>
    </subcellularLocation>
</comment>
<comment type="tissue specificity">
    <text evidence="4 5">Expressed in seedlings, stems, leaves, flowers and siliques (PubMed:18465198). Expressed in roots, leaves, and stems, including epidermis, silique walls, sepals, the upper portion of the styles, and seed coats, but not in developing embryos (PubMed:23585652).</text>
</comment>
<comment type="induction">
    <text evidence="3 4">Repressed by herbicides such as flufenacet and benfuresate (PubMed:12916765). Down-regulated by darkness and low temperature, and up-regulated by drought and osmotic stress (PubMed:18465198).</text>
</comment>
<comment type="disruption phenotype">
    <text evidence="5">No visible phenotype, but significant reduction in C24 VLCFAs and accumulation of C20 and C22 VLCFAs.</text>
</comment>
<comment type="similarity">
    <text evidence="7">Belongs to the thiolase-like superfamily. Chalcone/stilbene synthases family.</text>
</comment>
<comment type="sequence caution" evidence="7">
    <conflict type="frameshift">
        <sequence resource="EMBL" id="AK226284"/>
    </conflict>
</comment>
<sequence length="512" mass="57973">MEAANEPVNGGSVQIRTENNERRKLPNFLQSVNMKYVKLGYHYLITHLFKLCLVPLMAVLVTEISRLTTDDLYQIWLHLQYNLVAFIFLSALAIFGSTVYIMSRPRSVYLVDYSCYLPPESLQVKYQKFMDHSKLIEDFNESSLEFQRKILERSGLGEETYLPEALHCIPPRPTMMAAREESEQVMFGALDKLFENTKINPRDIGVLVVNCSLFNPTPSLSAMIVNKYKLRGNVKSFNLGGMGCSAGVISIDLAKDMLQVHRNTYAVVVSTENITQNWYFGNKKAMLIPNCLFRVGGSAILLSNKGKDRRRSKYKLVHTVRTHKGAVEKAFNCVYQEQDDNGKTGVSLSKDLMAIAGEALKANITTLGPLVLPISEQILFFMTLVTKKLFNSKLKPYIPDFKLAFDHFCIHAGGRAVIDELEKNLQLSQTHVEASRMTLHRFGNTSSSSIWYELAYIEAKGRMKKGNRVWQIAFGSGFKCNSAVWVALNNVKPSVSSPWEHCIDRYPVKLDF</sequence>
<feature type="chain" id="PRO_0000249101" description="3-ketoacyl-CoA synthase 9">
    <location>
        <begin position="1"/>
        <end position="512"/>
    </location>
</feature>
<feature type="transmembrane region" description="Helical" evidence="2">
    <location>
        <begin position="44"/>
        <end position="64"/>
    </location>
</feature>
<feature type="transmembrane region" description="Helical" evidence="2">
    <location>
        <begin position="83"/>
        <end position="103"/>
    </location>
</feature>
<feature type="domain" description="FAE" evidence="2">
    <location>
        <begin position="100"/>
        <end position="389"/>
    </location>
</feature>
<feature type="active site" evidence="1">
    <location>
        <position position="244"/>
    </location>
</feature>
<feature type="active site" evidence="1">
    <location>
        <position position="323"/>
    </location>
</feature>
<feature type="active site" evidence="1">
    <location>
        <position position="407"/>
    </location>
</feature>
<feature type="active site" evidence="1">
    <location>
        <position position="411"/>
    </location>
</feature>
<feature type="active site" evidence="1">
    <location>
        <position position="440"/>
    </location>
</feature>
<feature type="active site" evidence="1">
    <location>
        <position position="444"/>
    </location>
</feature>
<name>KCS9_ARATH</name>
<organism>
    <name type="scientific">Arabidopsis thaliana</name>
    <name type="common">Mouse-ear cress</name>
    <dbReference type="NCBI Taxonomy" id="3702"/>
    <lineage>
        <taxon>Eukaryota</taxon>
        <taxon>Viridiplantae</taxon>
        <taxon>Streptophyta</taxon>
        <taxon>Embryophyta</taxon>
        <taxon>Tracheophyta</taxon>
        <taxon>Spermatophyta</taxon>
        <taxon>Magnoliopsida</taxon>
        <taxon>eudicotyledons</taxon>
        <taxon>Gunneridae</taxon>
        <taxon>Pentapetalae</taxon>
        <taxon>rosids</taxon>
        <taxon>malvids</taxon>
        <taxon>Brassicales</taxon>
        <taxon>Brassicaceae</taxon>
        <taxon>Camelineae</taxon>
        <taxon>Arabidopsis</taxon>
    </lineage>
</organism>
<gene>
    <name evidence="6" type="primary">KCS9</name>
    <name evidence="8" type="ordered locus">At2g16280</name>
    <name evidence="9" type="ORF">F16F14.22</name>
</gene>
<reference key="1">
    <citation type="journal article" date="1999" name="Nature">
        <title>Sequence and analysis of chromosome 2 of the plant Arabidopsis thaliana.</title>
        <authorList>
            <person name="Lin X."/>
            <person name="Kaul S."/>
            <person name="Rounsley S.D."/>
            <person name="Shea T.P."/>
            <person name="Benito M.-I."/>
            <person name="Town C.D."/>
            <person name="Fujii C.Y."/>
            <person name="Mason T.M."/>
            <person name="Bowman C.L."/>
            <person name="Barnstead M.E."/>
            <person name="Feldblyum T.V."/>
            <person name="Buell C.R."/>
            <person name="Ketchum K.A."/>
            <person name="Lee J.J."/>
            <person name="Ronning C.M."/>
            <person name="Koo H.L."/>
            <person name="Moffat K.S."/>
            <person name="Cronin L.A."/>
            <person name="Shen M."/>
            <person name="Pai G."/>
            <person name="Van Aken S."/>
            <person name="Umayam L."/>
            <person name="Tallon L.J."/>
            <person name="Gill J.E."/>
            <person name="Adams M.D."/>
            <person name="Carrera A.J."/>
            <person name="Creasy T.H."/>
            <person name="Goodman H.M."/>
            <person name="Somerville C.R."/>
            <person name="Copenhaver G.P."/>
            <person name="Preuss D."/>
            <person name="Nierman W.C."/>
            <person name="White O."/>
            <person name="Eisen J.A."/>
            <person name="Salzberg S.L."/>
            <person name="Fraser C.M."/>
            <person name="Venter J.C."/>
        </authorList>
    </citation>
    <scope>NUCLEOTIDE SEQUENCE [LARGE SCALE GENOMIC DNA]</scope>
    <source>
        <strain>cv. Columbia</strain>
    </source>
</reference>
<reference key="2">
    <citation type="journal article" date="2017" name="Plant J.">
        <title>Araport11: a complete reannotation of the Arabidopsis thaliana reference genome.</title>
        <authorList>
            <person name="Cheng C.Y."/>
            <person name="Krishnakumar V."/>
            <person name="Chan A.P."/>
            <person name="Thibaud-Nissen F."/>
            <person name="Schobel S."/>
            <person name="Town C.D."/>
        </authorList>
    </citation>
    <scope>GENOME REANNOTATION</scope>
    <source>
        <strain>cv. Columbia</strain>
    </source>
</reference>
<reference key="3">
    <citation type="submission" date="2006-07" db="EMBL/GenBank/DDBJ databases">
        <title>Large-scale analysis of RIKEN Arabidopsis full-length (RAFL) cDNAs.</title>
        <authorList>
            <person name="Totoki Y."/>
            <person name="Seki M."/>
            <person name="Ishida J."/>
            <person name="Nakajima M."/>
            <person name="Enju A."/>
            <person name="Kamiya A."/>
            <person name="Narusaka M."/>
            <person name="Shin-i T."/>
            <person name="Nakagawa M."/>
            <person name="Sakamoto N."/>
            <person name="Oishi K."/>
            <person name="Kohara Y."/>
            <person name="Kobayashi M."/>
            <person name="Toyoda A."/>
            <person name="Sakaki Y."/>
            <person name="Sakurai T."/>
            <person name="Iida K."/>
            <person name="Akiyama K."/>
            <person name="Satou M."/>
            <person name="Toyoda T."/>
            <person name="Konagaya A."/>
            <person name="Carninci P."/>
            <person name="Kawai J."/>
            <person name="Hayashizaki Y."/>
            <person name="Shinozaki K."/>
        </authorList>
    </citation>
    <scope>NUCLEOTIDE SEQUENCE [LARGE SCALE MRNA]</scope>
    <source>
        <strain>cv. Columbia</strain>
    </source>
</reference>
<reference key="4">
    <citation type="journal article" date="2003" name="Pest Manag. Sci.">
        <title>Flufenacet herbicide treatment phenocopies the fiddlehead mutant in Arabidopsis thaliana.</title>
        <authorList>
            <person name="Lechelt-Kunze C."/>
            <person name="Meissner R.C."/>
            <person name="Drewes M."/>
            <person name="Tietjen K."/>
        </authorList>
    </citation>
    <scope>INDUCTION</scope>
    <scope>GENE FAMILY</scope>
</reference>
<reference key="5">
    <citation type="journal article" date="2008" name="Plant Mol. Biol.">
        <title>The VLCFA elongase gene family in Arabidopsis thaliana: phylogenetic analysis, 3D modelling and expression profiling.</title>
        <authorList>
            <person name="Joubes J."/>
            <person name="Raffaele S."/>
            <person name="Bourdenx B."/>
            <person name="Garcia C."/>
            <person name="Laroche-Traineau J."/>
            <person name="Moreau P."/>
            <person name="Domergue F."/>
            <person name="Lessire R."/>
        </authorList>
    </citation>
    <scope>GENE FAMILY</scope>
    <scope>NOMENCLATURE</scope>
    <scope>3D-STRUCTURE MODELING</scope>
    <scope>TISSUE SPECIFICITY</scope>
    <scope>INDUCTION</scope>
</reference>
<reference key="6">
    <citation type="journal article" date="2013" name="Plant Physiol.">
        <title>Arabidopsis 3-ketoacyl-coenzyme a synthase9 is involved in the synthesis of tetracosanoic acids as precursors of cuticular waxes, suberins, sphingolipids, and phospholipids.</title>
        <authorList>
            <person name="Kim J."/>
            <person name="Jung J.H."/>
            <person name="Lee S.B."/>
            <person name="Go Y.S."/>
            <person name="Kim H.J."/>
            <person name="Cahoon R."/>
            <person name="Markham J.E."/>
            <person name="Cahoon E.B."/>
            <person name="Suh M.C."/>
        </authorList>
    </citation>
    <scope>FUNCTION</scope>
    <scope>DISRUPTION PHENOTYPE</scope>
    <scope>SUBCELLULAR LOCATION</scope>
    <scope>TISSUE SPECIFICITY</scope>
</reference>
<evidence type="ECO:0000250" key="1">
    <source>
        <dbReference type="UniProtKB" id="Q38860"/>
    </source>
</evidence>
<evidence type="ECO:0000255" key="2"/>
<evidence type="ECO:0000269" key="3">
    <source>
    </source>
</evidence>
<evidence type="ECO:0000269" key="4">
    <source>
    </source>
</evidence>
<evidence type="ECO:0000269" key="5">
    <source>
    </source>
</evidence>
<evidence type="ECO:0000303" key="6">
    <source>
    </source>
</evidence>
<evidence type="ECO:0000305" key="7"/>
<evidence type="ECO:0000312" key="8">
    <source>
        <dbReference type="Araport" id="AT2G16280"/>
    </source>
</evidence>
<evidence type="ECO:0000312" key="9">
    <source>
        <dbReference type="EMBL" id="AAD22309.1"/>
    </source>
</evidence>
<keyword id="KW-0012">Acyltransferase</keyword>
<keyword id="KW-0256">Endoplasmic reticulum</keyword>
<keyword id="KW-0472">Membrane</keyword>
<keyword id="KW-1185">Reference proteome</keyword>
<keyword id="KW-0808">Transferase</keyword>
<keyword id="KW-0812">Transmembrane</keyword>
<keyword id="KW-1133">Transmembrane helix</keyword>